<organism>
    <name type="scientific">Enterobacter sp. (strain 638)</name>
    <dbReference type="NCBI Taxonomy" id="399742"/>
    <lineage>
        <taxon>Bacteria</taxon>
        <taxon>Pseudomonadati</taxon>
        <taxon>Pseudomonadota</taxon>
        <taxon>Gammaproteobacteria</taxon>
        <taxon>Enterobacterales</taxon>
        <taxon>Enterobacteriaceae</taxon>
        <taxon>Enterobacter</taxon>
    </lineage>
</organism>
<name>PYRC_ENT38</name>
<reference key="1">
    <citation type="journal article" date="2010" name="PLoS Genet.">
        <title>Genome sequence of the plant growth promoting endophytic bacterium Enterobacter sp. 638.</title>
        <authorList>
            <person name="Taghavi S."/>
            <person name="van der Lelie D."/>
            <person name="Hoffman A."/>
            <person name="Zhang Y.B."/>
            <person name="Walla M.D."/>
            <person name="Vangronsveld J."/>
            <person name="Newman L."/>
            <person name="Monchy S."/>
        </authorList>
    </citation>
    <scope>NUCLEOTIDE SEQUENCE [LARGE SCALE GENOMIC DNA]</scope>
    <source>
        <strain>638</strain>
    </source>
</reference>
<accession>A4W975</accession>
<comment type="function">
    <text evidence="1">Catalyzes the reversible cyclization of carbamoyl aspartate to dihydroorotate.</text>
</comment>
<comment type="catalytic activity">
    <reaction evidence="1">
        <text>(S)-dihydroorotate + H2O = N-carbamoyl-L-aspartate + H(+)</text>
        <dbReference type="Rhea" id="RHEA:24296"/>
        <dbReference type="ChEBI" id="CHEBI:15377"/>
        <dbReference type="ChEBI" id="CHEBI:15378"/>
        <dbReference type="ChEBI" id="CHEBI:30864"/>
        <dbReference type="ChEBI" id="CHEBI:32814"/>
        <dbReference type="EC" id="3.5.2.3"/>
    </reaction>
</comment>
<comment type="cofactor">
    <cofactor evidence="1">
        <name>Zn(2+)</name>
        <dbReference type="ChEBI" id="CHEBI:29105"/>
    </cofactor>
    <text evidence="1">Binds 2 Zn(2+) ions per subunit.</text>
</comment>
<comment type="pathway">
    <text evidence="1">Pyrimidine metabolism; UMP biosynthesis via de novo pathway; (S)-dihydroorotate from bicarbonate: step 3/3.</text>
</comment>
<comment type="subunit">
    <text evidence="1">Homodimer.</text>
</comment>
<comment type="similarity">
    <text evidence="1">Belongs to the metallo-dependent hydrolases superfamily. DHOase family. Class II DHOase subfamily.</text>
</comment>
<evidence type="ECO:0000255" key="1">
    <source>
        <dbReference type="HAMAP-Rule" id="MF_00219"/>
    </source>
</evidence>
<protein>
    <recommendedName>
        <fullName evidence="1">Dihydroorotase</fullName>
        <shortName evidence="1">DHOase</shortName>
        <ecNumber evidence="1">3.5.2.3</ecNumber>
    </recommendedName>
</protein>
<sequence length="348" mass="38922">MTAQPQVLKIRRPDDWHIHLRDGDMLKTVVPYTSELYGRAIVMPNLAPPVTTVDAAIAYRQRILDAVPTDHDFTPLMTCYLTDSLDPNEVECGFNEGVFTAAKLYPANATTNSSHGVTSIDAIMPVLERMEKLGMPLLVHGEVTHAEIDIFDREARFIETVMEPLRQRLQGLKVVFEHITTKDAAEYVRDGNELLAATITPQHLMFNRNHMLVGGVRPHLYCLPILKRNIHQQALRELVASGFTRAFLGTDSAPHARHRKEASCGCAGCFNAPTALASYATVFDEMGALEHFEAFASINGPRFYGLPLNETFIELERKESQVEESIALTDDTLIPFLAGEIVHWTVKR</sequence>
<dbReference type="EC" id="3.5.2.3" evidence="1"/>
<dbReference type="EMBL" id="CP000653">
    <property type="protein sequence ID" value="ABP60255.1"/>
    <property type="molecule type" value="Genomic_DNA"/>
</dbReference>
<dbReference type="RefSeq" id="WP_012016972.1">
    <property type="nucleotide sequence ID" value="NC_009436.1"/>
</dbReference>
<dbReference type="SMR" id="A4W975"/>
<dbReference type="STRING" id="399742.Ent638_1576"/>
<dbReference type="MEROPS" id="M38.A02"/>
<dbReference type="KEGG" id="ent:Ent638_1576"/>
<dbReference type="eggNOG" id="COG0418">
    <property type="taxonomic scope" value="Bacteria"/>
</dbReference>
<dbReference type="HOGENOM" id="CLU_041558_1_0_6"/>
<dbReference type="OrthoDB" id="9808095at2"/>
<dbReference type="UniPathway" id="UPA00070">
    <property type="reaction ID" value="UER00117"/>
</dbReference>
<dbReference type="Proteomes" id="UP000000230">
    <property type="component" value="Chromosome"/>
</dbReference>
<dbReference type="GO" id="GO:0005829">
    <property type="term" value="C:cytosol"/>
    <property type="evidence" value="ECO:0007669"/>
    <property type="project" value="TreeGrafter"/>
</dbReference>
<dbReference type="GO" id="GO:0004151">
    <property type="term" value="F:dihydroorotase activity"/>
    <property type="evidence" value="ECO:0007669"/>
    <property type="project" value="UniProtKB-UniRule"/>
</dbReference>
<dbReference type="GO" id="GO:0008270">
    <property type="term" value="F:zinc ion binding"/>
    <property type="evidence" value="ECO:0007669"/>
    <property type="project" value="UniProtKB-UniRule"/>
</dbReference>
<dbReference type="GO" id="GO:0006207">
    <property type="term" value="P:'de novo' pyrimidine nucleobase biosynthetic process"/>
    <property type="evidence" value="ECO:0007669"/>
    <property type="project" value="TreeGrafter"/>
</dbReference>
<dbReference type="GO" id="GO:0044205">
    <property type="term" value="P:'de novo' UMP biosynthetic process"/>
    <property type="evidence" value="ECO:0007669"/>
    <property type="project" value="UniProtKB-UniRule"/>
</dbReference>
<dbReference type="CDD" id="cd01294">
    <property type="entry name" value="DHOase"/>
    <property type="match status" value="1"/>
</dbReference>
<dbReference type="FunFam" id="3.20.20.140:FF:000006">
    <property type="entry name" value="Dihydroorotase"/>
    <property type="match status" value="1"/>
</dbReference>
<dbReference type="Gene3D" id="3.20.20.140">
    <property type="entry name" value="Metal-dependent hydrolases"/>
    <property type="match status" value="1"/>
</dbReference>
<dbReference type="HAMAP" id="MF_00219">
    <property type="entry name" value="PyrC_classII"/>
    <property type="match status" value="1"/>
</dbReference>
<dbReference type="InterPro" id="IPR006680">
    <property type="entry name" value="Amidohydro-rel"/>
</dbReference>
<dbReference type="InterPro" id="IPR004721">
    <property type="entry name" value="DHOdimr"/>
</dbReference>
<dbReference type="InterPro" id="IPR002195">
    <property type="entry name" value="Dihydroorotase_CS"/>
</dbReference>
<dbReference type="InterPro" id="IPR032466">
    <property type="entry name" value="Metal_Hydrolase"/>
</dbReference>
<dbReference type="NCBIfam" id="TIGR00856">
    <property type="entry name" value="pyrC_dimer"/>
    <property type="match status" value="1"/>
</dbReference>
<dbReference type="PANTHER" id="PTHR43137">
    <property type="entry name" value="DIHYDROOROTASE"/>
    <property type="match status" value="1"/>
</dbReference>
<dbReference type="PANTHER" id="PTHR43137:SF1">
    <property type="entry name" value="DIHYDROOROTASE"/>
    <property type="match status" value="1"/>
</dbReference>
<dbReference type="Pfam" id="PF01979">
    <property type="entry name" value="Amidohydro_1"/>
    <property type="match status" value="1"/>
</dbReference>
<dbReference type="PIRSF" id="PIRSF001237">
    <property type="entry name" value="DHOdimr"/>
    <property type="match status" value="1"/>
</dbReference>
<dbReference type="SUPFAM" id="SSF51556">
    <property type="entry name" value="Metallo-dependent hydrolases"/>
    <property type="match status" value="1"/>
</dbReference>
<dbReference type="PROSITE" id="PS00482">
    <property type="entry name" value="DIHYDROOROTASE_1"/>
    <property type="match status" value="1"/>
</dbReference>
<dbReference type="PROSITE" id="PS00483">
    <property type="entry name" value="DIHYDROOROTASE_2"/>
    <property type="match status" value="1"/>
</dbReference>
<keyword id="KW-0378">Hydrolase</keyword>
<keyword id="KW-0479">Metal-binding</keyword>
<keyword id="KW-0665">Pyrimidine biosynthesis</keyword>
<keyword id="KW-0862">Zinc</keyword>
<gene>
    <name evidence="1" type="primary">pyrC</name>
    <name type="ordered locus">Ent638_1576</name>
</gene>
<feature type="chain" id="PRO_1000058650" description="Dihydroorotase">
    <location>
        <begin position="1"/>
        <end position="348"/>
    </location>
</feature>
<feature type="active site" evidence="1">
    <location>
        <position position="251"/>
    </location>
</feature>
<feature type="binding site" evidence="1">
    <location>
        <position position="17"/>
    </location>
    <ligand>
        <name>Zn(2+)</name>
        <dbReference type="ChEBI" id="CHEBI:29105"/>
        <label>1</label>
    </ligand>
</feature>
<feature type="binding site" evidence="1">
    <location>
        <begin position="19"/>
        <end position="21"/>
    </location>
    <ligand>
        <name>substrate</name>
    </ligand>
</feature>
<feature type="binding site" evidence="1">
    <location>
        <position position="19"/>
    </location>
    <ligand>
        <name>Zn(2+)</name>
        <dbReference type="ChEBI" id="CHEBI:29105"/>
        <label>1</label>
    </ligand>
</feature>
<feature type="binding site" evidence="1">
    <location>
        <position position="45"/>
    </location>
    <ligand>
        <name>substrate</name>
    </ligand>
</feature>
<feature type="binding site" description="via carbamate group" evidence="1">
    <location>
        <position position="103"/>
    </location>
    <ligand>
        <name>Zn(2+)</name>
        <dbReference type="ChEBI" id="CHEBI:29105"/>
        <label>1</label>
    </ligand>
</feature>
<feature type="binding site" description="via carbamate group" evidence="1">
    <location>
        <position position="103"/>
    </location>
    <ligand>
        <name>Zn(2+)</name>
        <dbReference type="ChEBI" id="CHEBI:29105"/>
        <label>2</label>
    </ligand>
</feature>
<feature type="binding site" evidence="1">
    <location>
        <position position="140"/>
    </location>
    <ligand>
        <name>substrate</name>
    </ligand>
</feature>
<feature type="binding site" evidence="1">
    <location>
        <position position="140"/>
    </location>
    <ligand>
        <name>Zn(2+)</name>
        <dbReference type="ChEBI" id="CHEBI:29105"/>
        <label>2</label>
    </ligand>
</feature>
<feature type="binding site" evidence="1">
    <location>
        <position position="178"/>
    </location>
    <ligand>
        <name>Zn(2+)</name>
        <dbReference type="ChEBI" id="CHEBI:29105"/>
        <label>2</label>
    </ligand>
</feature>
<feature type="binding site" evidence="1">
    <location>
        <position position="223"/>
    </location>
    <ligand>
        <name>substrate</name>
    </ligand>
</feature>
<feature type="binding site" evidence="1">
    <location>
        <position position="251"/>
    </location>
    <ligand>
        <name>Zn(2+)</name>
        <dbReference type="ChEBI" id="CHEBI:29105"/>
        <label>1</label>
    </ligand>
</feature>
<feature type="binding site" evidence="1">
    <location>
        <position position="255"/>
    </location>
    <ligand>
        <name>substrate</name>
    </ligand>
</feature>
<feature type="binding site" evidence="1">
    <location>
        <position position="267"/>
    </location>
    <ligand>
        <name>substrate</name>
    </ligand>
</feature>
<feature type="modified residue" description="N6-carboxylysine" evidence="1">
    <location>
        <position position="103"/>
    </location>
</feature>
<proteinExistence type="inferred from homology"/>